<proteinExistence type="inferred from homology"/>
<dbReference type="EC" id="2.7.7.23" evidence="1"/>
<dbReference type="EC" id="2.3.1.157" evidence="1"/>
<dbReference type="EMBL" id="CP001139">
    <property type="protein sequence ID" value="ACH65067.1"/>
    <property type="molecule type" value="Genomic_DNA"/>
</dbReference>
<dbReference type="RefSeq" id="WP_012532802.1">
    <property type="nucleotide sequence ID" value="NC_011184.1"/>
</dbReference>
<dbReference type="SMR" id="B5FCY9"/>
<dbReference type="KEGG" id="vfm:VFMJ11_2697"/>
<dbReference type="HOGENOM" id="CLU_029499_15_2_6"/>
<dbReference type="UniPathway" id="UPA00113">
    <property type="reaction ID" value="UER00532"/>
</dbReference>
<dbReference type="UniPathway" id="UPA00113">
    <property type="reaction ID" value="UER00533"/>
</dbReference>
<dbReference type="UniPathway" id="UPA00973"/>
<dbReference type="Proteomes" id="UP000001857">
    <property type="component" value="Chromosome I"/>
</dbReference>
<dbReference type="GO" id="GO:0005737">
    <property type="term" value="C:cytoplasm"/>
    <property type="evidence" value="ECO:0007669"/>
    <property type="project" value="UniProtKB-SubCell"/>
</dbReference>
<dbReference type="GO" id="GO:0016020">
    <property type="term" value="C:membrane"/>
    <property type="evidence" value="ECO:0007669"/>
    <property type="project" value="GOC"/>
</dbReference>
<dbReference type="GO" id="GO:0019134">
    <property type="term" value="F:glucosamine-1-phosphate N-acetyltransferase activity"/>
    <property type="evidence" value="ECO:0007669"/>
    <property type="project" value="UniProtKB-UniRule"/>
</dbReference>
<dbReference type="GO" id="GO:0000287">
    <property type="term" value="F:magnesium ion binding"/>
    <property type="evidence" value="ECO:0007669"/>
    <property type="project" value="UniProtKB-UniRule"/>
</dbReference>
<dbReference type="GO" id="GO:0003977">
    <property type="term" value="F:UDP-N-acetylglucosamine diphosphorylase activity"/>
    <property type="evidence" value="ECO:0007669"/>
    <property type="project" value="UniProtKB-UniRule"/>
</dbReference>
<dbReference type="GO" id="GO:0000902">
    <property type="term" value="P:cell morphogenesis"/>
    <property type="evidence" value="ECO:0007669"/>
    <property type="project" value="UniProtKB-UniRule"/>
</dbReference>
<dbReference type="GO" id="GO:0071555">
    <property type="term" value="P:cell wall organization"/>
    <property type="evidence" value="ECO:0007669"/>
    <property type="project" value="UniProtKB-KW"/>
</dbReference>
<dbReference type="GO" id="GO:0009245">
    <property type="term" value="P:lipid A biosynthetic process"/>
    <property type="evidence" value="ECO:0007669"/>
    <property type="project" value="UniProtKB-UniRule"/>
</dbReference>
<dbReference type="GO" id="GO:0009252">
    <property type="term" value="P:peptidoglycan biosynthetic process"/>
    <property type="evidence" value="ECO:0007669"/>
    <property type="project" value="UniProtKB-UniRule"/>
</dbReference>
<dbReference type="GO" id="GO:0008360">
    <property type="term" value="P:regulation of cell shape"/>
    <property type="evidence" value="ECO:0007669"/>
    <property type="project" value="UniProtKB-KW"/>
</dbReference>
<dbReference type="GO" id="GO:0006048">
    <property type="term" value="P:UDP-N-acetylglucosamine biosynthetic process"/>
    <property type="evidence" value="ECO:0007669"/>
    <property type="project" value="UniProtKB-UniPathway"/>
</dbReference>
<dbReference type="CDD" id="cd02540">
    <property type="entry name" value="GT2_GlmU_N_bac"/>
    <property type="match status" value="1"/>
</dbReference>
<dbReference type="CDD" id="cd03353">
    <property type="entry name" value="LbH_GlmU_C"/>
    <property type="match status" value="1"/>
</dbReference>
<dbReference type="FunFam" id="3.90.550.10:FF:000006">
    <property type="entry name" value="Bifunctional protein GlmU"/>
    <property type="match status" value="1"/>
</dbReference>
<dbReference type="Gene3D" id="2.160.10.10">
    <property type="entry name" value="Hexapeptide repeat proteins"/>
    <property type="match status" value="1"/>
</dbReference>
<dbReference type="Gene3D" id="3.90.550.10">
    <property type="entry name" value="Spore Coat Polysaccharide Biosynthesis Protein SpsA, Chain A"/>
    <property type="match status" value="1"/>
</dbReference>
<dbReference type="HAMAP" id="MF_01631">
    <property type="entry name" value="GlmU"/>
    <property type="match status" value="1"/>
</dbReference>
<dbReference type="InterPro" id="IPR005882">
    <property type="entry name" value="Bifunctional_GlmU"/>
</dbReference>
<dbReference type="InterPro" id="IPR050065">
    <property type="entry name" value="GlmU-like"/>
</dbReference>
<dbReference type="InterPro" id="IPR038009">
    <property type="entry name" value="GlmU_C_LbH"/>
</dbReference>
<dbReference type="InterPro" id="IPR001451">
    <property type="entry name" value="Hexapep"/>
</dbReference>
<dbReference type="InterPro" id="IPR018357">
    <property type="entry name" value="Hexapep_transf_CS"/>
</dbReference>
<dbReference type="InterPro" id="IPR025877">
    <property type="entry name" value="MobA-like_NTP_Trfase"/>
</dbReference>
<dbReference type="InterPro" id="IPR029044">
    <property type="entry name" value="Nucleotide-diphossugar_trans"/>
</dbReference>
<dbReference type="InterPro" id="IPR011004">
    <property type="entry name" value="Trimer_LpxA-like_sf"/>
</dbReference>
<dbReference type="NCBIfam" id="TIGR01173">
    <property type="entry name" value="glmU"/>
    <property type="match status" value="1"/>
</dbReference>
<dbReference type="NCBIfam" id="NF006986">
    <property type="entry name" value="PRK09451.1"/>
    <property type="match status" value="1"/>
</dbReference>
<dbReference type="PANTHER" id="PTHR43584:SF3">
    <property type="entry name" value="BIFUNCTIONAL PROTEIN GLMU"/>
    <property type="match status" value="1"/>
</dbReference>
<dbReference type="PANTHER" id="PTHR43584">
    <property type="entry name" value="NUCLEOTIDYL TRANSFERASE"/>
    <property type="match status" value="1"/>
</dbReference>
<dbReference type="Pfam" id="PF00132">
    <property type="entry name" value="Hexapep"/>
    <property type="match status" value="2"/>
</dbReference>
<dbReference type="Pfam" id="PF12804">
    <property type="entry name" value="NTP_transf_3"/>
    <property type="match status" value="1"/>
</dbReference>
<dbReference type="SUPFAM" id="SSF53448">
    <property type="entry name" value="Nucleotide-diphospho-sugar transferases"/>
    <property type="match status" value="1"/>
</dbReference>
<dbReference type="SUPFAM" id="SSF51161">
    <property type="entry name" value="Trimeric LpxA-like enzymes"/>
    <property type="match status" value="1"/>
</dbReference>
<dbReference type="PROSITE" id="PS00101">
    <property type="entry name" value="HEXAPEP_TRANSFERASES"/>
    <property type="match status" value="1"/>
</dbReference>
<gene>
    <name evidence="1" type="primary">glmU</name>
    <name type="ordered locus">VFMJ11_2697</name>
</gene>
<reference key="1">
    <citation type="submission" date="2008-08" db="EMBL/GenBank/DDBJ databases">
        <title>Complete sequence of Vibrio fischeri strain MJ11.</title>
        <authorList>
            <person name="Mandel M.J."/>
            <person name="Stabb E.V."/>
            <person name="Ruby E.G."/>
            <person name="Ferriera S."/>
            <person name="Johnson J."/>
            <person name="Kravitz S."/>
            <person name="Beeson K."/>
            <person name="Sutton G."/>
            <person name="Rogers Y.-H."/>
            <person name="Friedman R."/>
            <person name="Frazier M."/>
            <person name="Venter J.C."/>
        </authorList>
    </citation>
    <scope>NUCLEOTIDE SEQUENCE [LARGE SCALE GENOMIC DNA]</scope>
    <source>
        <strain>MJ11</strain>
    </source>
</reference>
<name>GLMU_ALIFM</name>
<accession>B5FCY9</accession>
<keyword id="KW-0012">Acyltransferase</keyword>
<keyword id="KW-0133">Cell shape</keyword>
<keyword id="KW-0961">Cell wall biogenesis/degradation</keyword>
<keyword id="KW-0963">Cytoplasm</keyword>
<keyword id="KW-0460">Magnesium</keyword>
<keyword id="KW-0479">Metal-binding</keyword>
<keyword id="KW-0511">Multifunctional enzyme</keyword>
<keyword id="KW-0548">Nucleotidyltransferase</keyword>
<keyword id="KW-0573">Peptidoglycan synthesis</keyword>
<keyword id="KW-0677">Repeat</keyword>
<keyword id="KW-0808">Transferase</keyword>
<protein>
    <recommendedName>
        <fullName evidence="1">Bifunctional protein GlmU</fullName>
    </recommendedName>
    <domain>
        <recommendedName>
            <fullName evidence="1">UDP-N-acetylglucosamine pyrophosphorylase</fullName>
            <ecNumber evidence="1">2.7.7.23</ecNumber>
        </recommendedName>
        <alternativeName>
            <fullName evidence="1">N-acetylglucosamine-1-phosphate uridyltransferase</fullName>
        </alternativeName>
    </domain>
    <domain>
        <recommendedName>
            <fullName evidence="1">Glucosamine-1-phosphate N-acetyltransferase</fullName>
            <ecNumber evidence="1">2.3.1.157</ecNumber>
        </recommendedName>
    </domain>
</protein>
<sequence length="452" mass="48555">MNFSAVILAAGKGTRMYSNKPKVLHTLAGKPMAKHVIDTCEGLGAQNIHLVYGHGGDQMKAELGEERVQWVLQAEQLGTGHAVNQAAPEFADDEKVLVLYGDVPLISAETVENLLDAQPTGGIALLTVVLDNPMGYGRIIRRNGPVIAIVEQKDATEEQKLIKEINTGVMVATGGDLKRWLAALKNENAQGEYYLTDIIAAAHDEGRAVEAVHPVSPIEVEGVNDRAQLARLERAYQAAQAQKLLEQGVMLRDPSRFDLRGTLQCGMDIEIDANVIIEGNVTLGDNVVIGAGCVLKDCEIDDNTVLRPYSVIEGATVGEECTVGPFTRLRPGAELCNDAHVGNFVEVKNVRLGEGSKANHLTYLGDAEIGKRVNVGAGVITCNYDGANKFKTIIGDDVFVGSDSQLIAPVTVANGATVGAGSTVTKDVNENELYISRAKERRIANWQRPTKK</sequence>
<organism>
    <name type="scientific">Aliivibrio fischeri (strain MJ11)</name>
    <name type="common">Vibrio fischeri</name>
    <dbReference type="NCBI Taxonomy" id="388396"/>
    <lineage>
        <taxon>Bacteria</taxon>
        <taxon>Pseudomonadati</taxon>
        <taxon>Pseudomonadota</taxon>
        <taxon>Gammaproteobacteria</taxon>
        <taxon>Vibrionales</taxon>
        <taxon>Vibrionaceae</taxon>
        <taxon>Aliivibrio</taxon>
    </lineage>
</organism>
<comment type="function">
    <text evidence="1">Catalyzes the last two sequential reactions in the de novo biosynthetic pathway for UDP-N-acetylglucosamine (UDP-GlcNAc). The C-terminal domain catalyzes the transfer of acetyl group from acetyl coenzyme A to glucosamine-1-phosphate (GlcN-1-P) to produce N-acetylglucosamine-1-phosphate (GlcNAc-1-P), which is converted into UDP-GlcNAc by the transfer of uridine 5-monophosphate (from uridine 5-triphosphate), a reaction catalyzed by the N-terminal domain.</text>
</comment>
<comment type="catalytic activity">
    <reaction evidence="1">
        <text>alpha-D-glucosamine 1-phosphate + acetyl-CoA = N-acetyl-alpha-D-glucosamine 1-phosphate + CoA + H(+)</text>
        <dbReference type="Rhea" id="RHEA:13725"/>
        <dbReference type="ChEBI" id="CHEBI:15378"/>
        <dbReference type="ChEBI" id="CHEBI:57287"/>
        <dbReference type="ChEBI" id="CHEBI:57288"/>
        <dbReference type="ChEBI" id="CHEBI:57776"/>
        <dbReference type="ChEBI" id="CHEBI:58516"/>
        <dbReference type="EC" id="2.3.1.157"/>
    </reaction>
</comment>
<comment type="catalytic activity">
    <reaction evidence="1">
        <text>N-acetyl-alpha-D-glucosamine 1-phosphate + UTP + H(+) = UDP-N-acetyl-alpha-D-glucosamine + diphosphate</text>
        <dbReference type="Rhea" id="RHEA:13509"/>
        <dbReference type="ChEBI" id="CHEBI:15378"/>
        <dbReference type="ChEBI" id="CHEBI:33019"/>
        <dbReference type="ChEBI" id="CHEBI:46398"/>
        <dbReference type="ChEBI" id="CHEBI:57705"/>
        <dbReference type="ChEBI" id="CHEBI:57776"/>
        <dbReference type="EC" id="2.7.7.23"/>
    </reaction>
</comment>
<comment type="cofactor">
    <cofactor evidence="1">
        <name>Mg(2+)</name>
        <dbReference type="ChEBI" id="CHEBI:18420"/>
    </cofactor>
    <text evidence="1">Binds 1 Mg(2+) ion per subunit.</text>
</comment>
<comment type="pathway">
    <text evidence="1">Nucleotide-sugar biosynthesis; UDP-N-acetyl-alpha-D-glucosamine biosynthesis; N-acetyl-alpha-D-glucosamine 1-phosphate from alpha-D-glucosamine 6-phosphate (route II): step 2/2.</text>
</comment>
<comment type="pathway">
    <text evidence="1">Nucleotide-sugar biosynthesis; UDP-N-acetyl-alpha-D-glucosamine biosynthesis; UDP-N-acetyl-alpha-D-glucosamine from N-acetyl-alpha-D-glucosamine 1-phosphate: step 1/1.</text>
</comment>
<comment type="pathway">
    <text evidence="1">Bacterial outer membrane biogenesis; LPS lipid A biosynthesis.</text>
</comment>
<comment type="subunit">
    <text evidence="1">Homotrimer.</text>
</comment>
<comment type="subcellular location">
    <subcellularLocation>
        <location evidence="1">Cytoplasm</location>
    </subcellularLocation>
</comment>
<comment type="similarity">
    <text evidence="1">In the N-terminal section; belongs to the N-acetylglucosamine-1-phosphate uridyltransferase family.</text>
</comment>
<comment type="similarity">
    <text evidence="1">In the C-terminal section; belongs to the transferase hexapeptide repeat family.</text>
</comment>
<feature type="chain" id="PRO_1000186510" description="Bifunctional protein GlmU">
    <location>
        <begin position="1"/>
        <end position="452"/>
    </location>
</feature>
<feature type="region of interest" description="Pyrophosphorylase" evidence="1">
    <location>
        <begin position="1"/>
        <end position="226"/>
    </location>
</feature>
<feature type="region of interest" description="Linker" evidence="1">
    <location>
        <begin position="227"/>
        <end position="247"/>
    </location>
</feature>
<feature type="region of interest" description="N-acetyltransferase" evidence="1">
    <location>
        <begin position="248"/>
        <end position="452"/>
    </location>
</feature>
<feature type="active site" description="Proton acceptor" evidence="1">
    <location>
        <position position="360"/>
    </location>
</feature>
<feature type="binding site" evidence="1">
    <location>
        <begin position="8"/>
        <end position="11"/>
    </location>
    <ligand>
        <name>UDP-N-acetyl-alpha-D-glucosamine</name>
        <dbReference type="ChEBI" id="CHEBI:57705"/>
    </ligand>
</feature>
<feature type="binding site" evidence="1">
    <location>
        <position position="22"/>
    </location>
    <ligand>
        <name>UDP-N-acetyl-alpha-D-glucosamine</name>
        <dbReference type="ChEBI" id="CHEBI:57705"/>
    </ligand>
</feature>
<feature type="binding site" evidence="1">
    <location>
        <position position="73"/>
    </location>
    <ligand>
        <name>UDP-N-acetyl-alpha-D-glucosamine</name>
        <dbReference type="ChEBI" id="CHEBI:57705"/>
    </ligand>
</feature>
<feature type="binding site" evidence="1">
    <location>
        <begin position="78"/>
        <end position="79"/>
    </location>
    <ligand>
        <name>UDP-N-acetyl-alpha-D-glucosamine</name>
        <dbReference type="ChEBI" id="CHEBI:57705"/>
    </ligand>
</feature>
<feature type="binding site" evidence="1">
    <location>
        <begin position="100"/>
        <end position="102"/>
    </location>
    <ligand>
        <name>UDP-N-acetyl-alpha-D-glucosamine</name>
        <dbReference type="ChEBI" id="CHEBI:57705"/>
    </ligand>
</feature>
<feature type="binding site" evidence="1">
    <location>
        <position position="102"/>
    </location>
    <ligand>
        <name>Mg(2+)</name>
        <dbReference type="ChEBI" id="CHEBI:18420"/>
    </ligand>
</feature>
<feature type="binding site" evidence="1">
    <location>
        <position position="137"/>
    </location>
    <ligand>
        <name>UDP-N-acetyl-alpha-D-glucosamine</name>
        <dbReference type="ChEBI" id="CHEBI:57705"/>
    </ligand>
</feature>
<feature type="binding site" evidence="1">
    <location>
        <position position="151"/>
    </location>
    <ligand>
        <name>UDP-N-acetyl-alpha-D-glucosamine</name>
        <dbReference type="ChEBI" id="CHEBI:57705"/>
    </ligand>
</feature>
<feature type="binding site" evidence="1">
    <location>
        <position position="166"/>
    </location>
    <ligand>
        <name>UDP-N-acetyl-alpha-D-glucosamine</name>
        <dbReference type="ChEBI" id="CHEBI:57705"/>
    </ligand>
</feature>
<feature type="binding site" evidence="1">
    <location>
        <position position="224"/>
    </location>
    <ligand>
        <name>Mg(2+)</name>
        <dbReference type="ChEBI" id="CHEBI:18420"/>
    </ligand>
</feature>
<feature type="binding site" evidence="1">
    <location>
        <position position="224"/>
    </location>
    <ligand>
        <name>UDP-N-acetyl-alpha-D-glucosamine</name>
        <dbReference type="ChEBI" id="CHEBI:57705"/>
    </ligand>
</feature>
<feature type="binding site" evidence="1">
    <location>
        <position position="330"/>
    </location>
    <ligand>
        <name>UDP-N-acetyl-alpha-D-glucosamine</name>
        <dbReference type="ChEBI" id="CHEBI:57705"/>
    </ligand>
</feature>
<feature type="binding site" evidence="1">
    <location>
        <position position="348"/>
    </location>
    <ligand>
        <name>UDP-N-acetyl-alpha-D-glucosamine</name>
        <dbReference type="ChEBI" id="CHEBI:57705"/>
    </ligand>
</feature>
<feature type="binding site" evidence="1">
    <location>
        <position position="363"/>
    </location>
    <ligand>
        <name>UDP-N-acetyl-alpha-D-glucosamine</name>
        <dbReference type="ChEBI" id="CHEBI:57705"/>
    </ligand>
</feature>
<feature type="binding site" evidence="1">
    <location>
        <position position="374"/>
    </location>
    <ligand>
        <name>UDP-N-acetyl-alpha-D-glucosamine</name>
        <dbReference type="ChEBI" id="CHEBI:57705"/>
    </ligand>
</feature>
<feature type="binding site" evidence="1">
    <location>
        <position position="377"/>
    </location>
    <ligand>
        <name>acetyl-CoA</name>
        <dbReference type="ChEBI" id="CHEBI:57288"/>
    </ligand>
</feature>
<feature type="binding site" evidence="1">
    <location>
        <begin position="383"/>
        <end position="384"/>
    </location>
    <ligand>
        <name>acetyl-CoA</name>
        <dbReference type="ChEBI" id="CHEBI:57288"/>
    </ligand>
</feature>
<feature type="binding site" evidence="1">
    <location>
        <position position="402"/>
    </location>
    <ligand>
        <name>acetyl-CoA</name>
        <dbReference type="ChEBI" id="CHEBI:57288"/>
    </ligand>
</feature>
<feature type="binding site" evidence="1">
    <location>
        <position position="420"/>
    </location>
    <ligand>
        <name>acetyl-CoA</name>
        <dbReference type="ChEBI" id="CHEBI:57288"/>
    </ligand>
</feature>
<feature type="binding site" evidence="1">
    <location>
        <position position="437"/>
    </location>
    <ligand>
        <name>acetyl-CoA</name>
        <dbReference type="ChEBI" id="CHEBI:57288"/>
    </ligand>
</feature>
<evidence type="ECO:0000255" key="1">
    <source>
        <dbReference type="HAMAP-Rule" id="MF_01631"/>
    </source>
</evidence>